<keyword id="KW-0025">Alternative splicing</keyword>
<keyword id="KW-0963">Cytoplasm</keyword>
<keyword id="KW-0597">Phosphoprotein</keyword>
<keyword id="KW-1185">Reference proteome</keyword>
<keyword id="KW-0703">Sarcoplasmic reticulum</keyword>
<name>MTMRC_RAT</name>
<sequence length="748" mass="85686">MLGKGGVGGGGGTKAPKPSFVSYVRPEEIHTNEKEVTEKEEVTLHLLPGEQLLCEASTVLKYVQEDSCQLGICGRLVCTDFRISFLGDEGSAVDNGAETHFKNKIIGVNDIPLHCVDQIYGVFDEKKKPLFGQLKKYPEKLVIHCKDLRVLHFCLRYTKEEEVKRIVSGIIHHTQSPKLLKRLFLFSYAAAVHGTAADPRNCTVMFDTPKDWCWELERTKGSVKYKTVSVNEGYRVCDRLPAYFVVPTPLLEDDVKRFQGRGIPIWCWSCHNGSALLKMSALPKEQDDSALQIQKSFLDGIYKTIHRPPYEMVKTEDLSSNFLSLQEIQSSYCKFKQLFLIDSSSEFWDTDVKWFSLLESSGWLDIIRRCLKRAIEIIECLEAQNMNVLLLEENASDLCCLLSSLVQVMMDAHCRTWTGFQSLIQKEWVMGGHSFLDRCNHLHQSDKEEVPVFLLFLDCVWQLVHQHPPAFEFTETYLTVLSDSLYIPIFSTFFFNSPHQKDTNMGRESLDAQSKPLTLLTVWDWSVQFEPKAQTLLRNPLYVEKPKLDKGQRKGSRFKHQRQLSLPLTQSKSSPKRGFFREETDHLIKNLLGKRISKLINSSDDLQDNSREFYDNWHSKPTDYHGLLLPHIEGPEIKVWAQRYLRWIPEAQILGGGRVATMGKLLEMMEEVQSLQEKIEARHHRQEAIHVQAPGLLRNSARLSSLFPFAMHQRHSAKPVLPTSGWKALGGEDDLAKREDEFVDLGDV</sequence>
<organism>
    <name type="scientific">Rattus norvegicus</name>
    <name type="common">Rat</name>
    <dbReference type="NCBI Taxonomy" id="10116"/>
    <lineage>
        <taxon>Eukaryota</taxon>
        <taxon>Metazoa</taxon>
        <taxon>Chordata</taxon>
        <taxon>Craniata</taxon>
        <taxon>Vertebrata</taxon>
        <taxon>Euteleostomi</taxon>
        <taxon>Mammalia</taxon>
        <taxon>Eutheria</taxon>
        <taxon>Euarchontoglires</taxon>
        <taxon>Glires</taxon>
        <taxon>Rodentia</taxon>
        <taxon>Myomorpha</taxon>
        <taxon>Muroidea</taxon>
        <taxon>Muridae</taxon>
        <taxon>Murinae</taxon>
        <taxon>Rattus</taxon>
    </lineage>
</organism>
<reference key="1">
    <citation type="journal article" date="2004" name="Nature">
        <title>Genome sequence of the Brown Norway rat yields insights into mammalian evolution.</title>
        <authorList>
            <person name="Gibbs R.A."/>
            <person name="Weinstock G.M."/>
            <person name="Metzker M.L."/>
            <person name="Muzny D.M."/>
            <person name="Sodergren E.J."/>
            <person name="Scherer S."/>
            <person name="Scott G."/>
            <person name="Steffen D."/>
            <person name="Worley K.C."/>
            <person name="Burch P.E."/>
            <person name="Okwuonu G."/>
            <person name="Hines S."/>
            <person name="Lewis L."/>
            <person name="Deramo C."/>
            <person name="Delgado O."/>
            <person name="Dugan-Rocha S."/>
            <person name="Miner G."/>
            <person name="Morgan M."/>
            <person name="Hawes A."/>
            <person name="Gill R."/>
            <person name="Holt R.A."/>
            <person name="Adams M.D."/>
            <person name="Amanatides P.G."/>
            <person name="Baden-Tillson H."/>
            <person name="Barnstead M."/>
            <person name="Chin S."/>
            <person name="Evans C.A."/>
            <person name="Ferriera S."/>
            <person name="Fosler C."/>
            <person name="Glodek A."/>
            <person name="Gu Z."/>
            <person name="Jennings D."/>
            <person name="Kraft C.L."/>
            <person name="Nguyen T."/>
            <person name="Pfannkoch C.M."/>
            <person name="Sitter C."/>
            <person name="Sutton G.G."/>
            <person name="Venter J.C."/>
            <person name="Woodage T."/>
            <person name="Smith D."/>
            <person name="Lee H.-M."/>
            <person name="Gustafson E."/>
            <person name="Cahill P."/>
            <person name="Kana A."/>
            <person name="Doucette-Stamm L."/>
            <person name="Weinstock K."/>
            <person name="Fechtel K."/>
            <person name="Weiss R.B."/>
            <person name="Dunn D.M."/>
            <person name="Green E.D."/>
            <person name="Blakesley R.W."/>
            <person name="Bouffard G.G."/>
            <person name="De Jong P.J."/>
            <person name="Osoegawa K."/>
            <person name="Zhu B."/>
            <person name="Marra M."/>
            <person name="Schein J."/>
            <person name="Bosdet I."/>
            <person name="Fjell C."/>
            <person name="Jones S."/>
            <person name="Krzywinski M."/>
            <person name="Mathewson C."/>
            <person name="Siddiqui A."/>
            <person name="Wye N."/>
            <person name="McPherson J."/>
            <person name="Zhao S."/>
            <person name="Fraser C.M."/>
            <person name="Shetty J."/>
            <person name="Shatsman S."/>
            <person name="Geer K."/>
            <person name="Chen Y."/>
            <person name="Abramzon S."/>
            <person name="Nierman W.C."/>
            <person name="Havlak P.H."/>
            <person name="Chen R."/>
            <person name="Durbin K.J."/>
            <person name="Egan A."/>
            <person name="Ren Y."/>
            <person name="Song X.-Z."/>
            <person name="Li B."/>
            <person name="Liu Y."/>
            <person name="Qin X."/>
            <person name="Cawley S."/>
            <person name="Cooney A.J."/>
            <person name="D'Souza L.M."/>
            <person name="Martin K."/>
            <person name="Wu J.Q."/>
            <person name="Gonzalez-Garay M.L."/>
            <person name="Jackson A.R."/>
            <person name="Kalafus K.J."/>
            <person name="McLeod M.P."/>
            <person name="Milosavljevic A."/>
            <person name="Virk D."/>
            <person name="Volkov A."/>
            <person name="Wheeler D.A."/>
            <person name="Zhang Z."/>
            <person name="Bailey J.A."/>
            <person name="Eichler E.E."/>
            <person name="Tuzun E."/>
            <person name="Birney E."/>
            <person name="Mongin E."/>
            <person name="Ureta-Vidal A."/>
            <person name="Woodwark C."/>
            <person name="Zdobnov E."/>
            <person name="Bork P."/>
            <person name="Suyama M."/>
            <person name="Torrents D."/>
            <person name="Alexandersson M."/>
            <person name="Trask B.J."/>
            <person name="Young J.M."/>
            <person name="Huang H."/>
            <person name="Wang H."/>
            <person name="Xing H."/>
            <person name="Daniels S."/>
            <person name="Gietzen D."/>
            <person name="Schmidt J."/>
            <person name="Stevens K."/>
            <person name="Vitt U."/>
            <person name="Wingrove J."/>
            <person name="Camara F."/>
            <person name="Mar Alba M."/>
            <person name="Abril J.F."/>
            <person name="Guigo R."/>
            <person name="Smit A."/>
            <person name="Dubchak I."/>
            <person name="Rubin E.M."/>
            <person name="Couronne O."/>
            <person name="Poliakov A."/>
            <person name="Huebner N."/>
            <person name="Ganten D."/>
            <person name="Goesele C."/>
            <person name="Hummel O."/>
            <person name="Kreitler T."/>
            <person name="Lee Y.-A."/>
            <person name="Monti J."/>
            <person name="Schulz H."/>
            <person name="Zimdahl H."/>
            <person name="Himmelbauer H."/>
            <person name="Lehrach H."/>
            <person name="Jacob H.J."/>
            <person name="Bromberg S."/>
            <person name="Gullings-Handley J."/>
            <person name="Jensen-Seaman M.I."/>
            <person name="Kwitek A.E."/>
            <person name="Lazar J."/>
            <person name="Pasko D."/>
            <person name="Tonellato P.J."/>
            <person name="Twigger S."/>
            <person name="Ponting C.P."/>
            <person name="Duarte J.M."/>
            <person name="Rice S."/>
            <person name="Goodstadt L."/>
            <person name="Beatson S.A."/>
            <person name="Emes R.D."/>
            <person name="Winter E.E."/>
            <person name="Webber C."/>
            <person name="Brandt P."/>
            <person name="Nyakatura G."/>
            <person name="Adetobi M."/>
            <person name="Chiaromonte F."/>
            <person name="Elnitski L."/>
            <person name="Eswara P."/>
            <person name="Hardison R.C."/>
            <person name="Hou M."/>
            <person name="Kolbe D."/>
            <person name="Makova K."/>
            <person name="Miller W."/>
            <person name="Nekrutenko A."/>
            <person name="Riemer C."/>
            <person name="Schwartz S."/>
            <person name="Taylor J."/>
            <person name="Yang S."/>
            <person name="Zhang Y."/>
            <person name="Lindpaintner K."/>
            <person name="Andrews T.D."/>
            <person name="Caccamo M."/>
            <person name="Clamp M."/>
            <person name="Clarke L."/>
            <person name="Curwen V."/>
            <person name="Durbin R.M."/>
            <person name="Eyras E."/>
            <person name="Searle S.M."/>
            <person name="Cooper G.M."/>
            <person name="Batzoglou S."/>
            <person name="Brudno M."/>
            <person name="Sidow A."/>
            <person name="Stone E.A."/>
            <person name="Payseur B.A."/>
            <person name="Bourque G."/>
            <person name="Lopez-Otin C."/>
            <person name="Puente X.S."/>
            <person name="Chakrabarti K."/>
            <person name="Chatterji S."/>
            <person name="Dewey C."/>
            <person name="Pachter L."/>
            <person name="Bray N."/>
            <person name="Yap V.B."/>
            <person name="Caspi A."/>
            <person name="Tesler G."/>
            <person name="Pevzner P.A."/>
            <person name="Haussler D."/>
            <person name="Roskin K.M."/>
            <person name="Baertsch R."/>
            <person name="Clawson H."/>
            <person name="Furey T.S."/>
            <person name="Hinrichs A.S."/>
            <person name="Karolchik D."/>
            <person name="Kent W.J."/>
            <person name="Rosenbloom K.R."/>
            <person name="Trumbower H."/>
            <person name="Weirauch M."/>
            <person name="Cooper D.N."/>
            <person name="Stenson P.D."/>
            <person name="Ma B."/>
            <person name="Brent M."/>
            <person name="Arumugam M."/>
            <person name="Shteynberg D."/>
            <person name="Copley R.R."/>
            <person name="Taylor M.S."/>
            <person name="Riethman H."/>
            <person name="Mudunuri U."/>
            <person name="Peterson J."/>
            <person name="Guyer M."/>
            <person name="Felsenfeld A."/>
            <person name="Old S."/>
            <person name="Mockrin S."/>
            <person name="Collins F.S."/>
        </authorList>
    </citation>
    <scope>NUCLEOTIDE SEQUENCE [LARGE SCALE GENOMIC DNA]</scope>
    <source>
        <strain>Brown Norway</strain>
    </source>
</reference>
<reference key="2">
    <citation type="journal article" date="2004" name="Genome Res.">
        <title>The status, quality, and expansion of the NIH full-length cDNA project: the Mammalian Gene Collection (MGC).</title>
        <authorList>
            <consortium name="The MGC Project Team"/>
        </authorList>
    </citation>
    <scope>NUCLEOTIDE SEQUENCE [LARGE SCALE MRNA] (ISOFORM 2)</scope>
    <source>
        <tissue>Liver</tissue>
    </source>
</reference>
<reference key="3">
    <citation type="journal article" date="2012" name="Nat. Commun.">
        <title>Quantitative maps of protein phosphorylation sites across 14 different rat organs and tissues.</title>
        <authorList>
            <person name="Lundby A."/>
            <person name="Secher A."/>
            <person name="Lage K."/>
            <person name="Nordsborg N.B."/>
            <person name="Dmytriyev A."/>
            <person name="Lundby C."/>
            <person name="Olsen J.V."/>
        </authorList>
    </citation>
    <scope>PHOSPHORYLATION [LARGE SCALE ANALYSIS] AT SER-602</scope>
    <scope>IDENTIFICATION BY MASS SPECTROMETRY [LARGE SCALE ANALYSIS]</scope>
</reference>
<feature type="chain" id="PRO_0000315827" description="Myotubularin-related protein 12">
    <location>
        <begin position="1"/>
        <end position="748"/>
    </location>
</feature>
<feature type="domain" description="Myotubularin phosphatase" evidence="4">
    <location>
        <begin position="206"/>
        <end position="644"/>
    </location>
</feature>
<feature type="region of interest" description="Interaction with MTM1" evidence="1">
    <location>
        <begin position="450"/>
        <end position="559"/>
    </location>
</feature>
<feature type="region of interest" description="Disordered" evidence="5">
    <location>
        <begin position="549"/>
        <end position="576"/>
    </location>
</feature>
<feature type="compositionally biased region" description="Basic residues" evidence="5">
    <location>
        <begin position="553"/>
        <end position="562"/>
    </location>
</feature>
<feature type="compositionally biased region" description="Polar residues" evidence="5">
    <location>
        <begin position="563"/>
        <end position="573"/>
    </location>
</feature>
<feature type="modified residue" description="Phosphoserine" evidence="3">
    <location>
        <position position="565"/>
    </location>
</feature>
<feature type="modified residue" description="Phosphoserine" evidence="8">
    <location>
        <position position="602"/>
    </location>
</feature>
<feature type="splice variant" id="VSP_030724" description="In isoform 2." evidence="6">
    <original>HQRQLSLPLTQSKSSPKRGFFREETDHL</original>
    <variation>VRCAVLTPPHPHLHQLLHPVYVRTKATL</variation>
    <location>
        <begin position="560"/>
        <end position="587"/>
    </location>
</feature>
<feature type="splice variant" id="VSP_030725" description="In isoform 2." evidence="6">
    <location>
        <begin position="588"/>
        <end position="748"/>
    </location>
</feature>
<gene>
    <name type="primary">Mtmr12</name>
    <name type="synonym">Pip3ap</name>
</gene>
<protein>
    <recommendedName>
        <fullName>Myotubularin-related protein 12</fullName>
    </recommendedName>
    <alternativeName>
        <fullName evidence="7">Inactive phosphatidylinositol 3-phosphatase 12</fullName>
    </alternativeName>
    <alternativeName>
        <fullName>Phosphatidylinositol 3-phosphatase-associated protein</fullName>
    </alternativeName>
</protein>
<evidence type="ECO:0000250" key="1"/>
<evidence type="ECO:0000250" key="2">
    <source>
        <dbReference type="UniProtKB" id="Q80TA6"/>
    </source>
</evidence>
<evidence type="ECO:0000250" key="3">
    <source>
        <dbReference type="UniProtKB" id="Q9C0I1"/>
    </source>
</evidence>
<evidence type="ECO:0000255" key="4">
    <source>
        <dbReference type="PROSITE-ProRule" id="PRU00669"/>
    </source>
</evidence>
<evidence type="ECO:0000256" key="5">
    <source>
        <dbReference type="SAM" id="MobiDB-lite"/>
    </source>
</evidence>
<evidence type="ECO:0000303" key="6">
    <source>
    </source>
</evidence>
<evidence type="ECO:0000305" key="7"/>
<evidence type="ECO:0007744" key="8">
    <source>
    </source>
</evidence>
<accession>Q5FVM6</accession>
<comment type="function">
    <text evidence="2">Acts as an adapter for the myotubularin-related phosphatases. Regulates phosphatase MTM1 protein stability and possibly its intracellular location. By stabilizing MTM1 protein levels, required for skeletal muscle maintenance but not for myogenesis.</text>
</comment>
<comment type="subunit">
    <text evidence="2 3">Heterodimer with lipid phosphatase MTM1 (By similarity). Heterodimer with lipid phosphatase MTMR2 (By similarity).</text>
</comment>
<comment type="subcellular location">
    <subcellularLocation>
        <location evidence="3">Cytoplasm</location>
    </subcellularLocation>
    <subcellularLocation>
        <location evidence="2">Sarcoplasmic reticulum</location>
    </subcellularLocation>
    <subcellularLocation>
        <location evidence="2">Cytoplasm</location>
        <location evidence="2">Myofibril</location>
        <location evidence="2">Sarcomere</location>
    </subcellularLocation>
    <text evidence="2 3">Localizes to punctate vesicles when associated with MTM1 (By similarity). Localizes to triads, a structure formed by a T tubule and two sarcoplasmic reticulum terminal cisterna. In skeletal muscles, co-localizes with MTM1 in the sarcomere. Partially localizes to the sarcoplasmic reticulum in skeletal muscles (By similarity).</text>
</comment>
<comment type="alternative products">
    <event type="alternative splicing"/>
    <isoform>
        <id>Q5FVM6-1</id>
        <name>1</name>
        <sequence type="displayed"/>
    </isoform>
    <isoform>
        <id>Q5FVM6-2</id>
        <name>2</name>
        <sequence type="described" ref="VSP_030724 VSP_030725"/>
    </isoform>
</comment>
<comment type="similarity">
    <text evidence="7">Belongs to the protein-tyrosine phosphatase family. Non-receptor class myotubularin subfamily.</text>
</comment>
<comment type="caution">
    <text evidence="3">Although it belongs to the non-receptor class myotubularin subfamily, lacks the conserved active site cysteine residue at position 392 in the dsPTPase catalytic loop and does not have phosphatase activity.</text>
</comment>
<dbReference type="EMBL" id="AABR03012204">
    <property type="status" value="NOT_ANNOTATED_CDS"/>
    <property type="molecule type" value="Genomic_DNA"/>
</dbReference>
<dbReference type="EMBL" id="BC089876">
    <property type="protein sequence ID" value="AAH89876.1"/>
    <property type="molecule type" value="mRNA"/>
</dbReference>
<dbReference type="RefSeq" id="NP_001012077.1">
    <molecule id="Q5FVM6-2"/>
    <property type="nucleotide sequence ID" value="NM_001012077.2"/>
</dbReference>
<dbReference type="RefSeq" id="NP_001401964.1">
    <molecule id="Q5FVM6-1"/>
    <property type="nucleotide sequence ID" value="NM_001415035.1"/>
</dbReference>
<dbReference type="RefSeq" id="XP_006232108.1">
    <property type="nucleotide sequence ID" value="XM_006232046.3"/>
</dbReference>
<dbReference type="SMR" id="Q5FVM6"/>
<dbReference type="BioGRID" id="259560">
    <property type="interactions" value="1"/>
</dbReference>
<dbReference type="FunCoup" id="Q5FVM6">
    <property type="interactions" value="2945"/>
</dbReference>
<dbReference type="STRING" id="10116.ENSRNOP00000036677"/>
<dbReference type="GlyGen" id="Q5FVM6">
    <property type="glycosylation" value="1 site"/>
</dbReference>
<dbReference type="iPTMnet" id="Q5FVM6"/>
<dbReference type="PhosphoSitePlus" id="Q5FVM6"/>
<dbReference type="jPOST" id="Q5FVM6"/>
<dbReference type="PaxDb" id="10116-ENSRNOP00000036677"/>
<dbReference type="GeneID" id="310155"/>
<dbReference type="KEGG" id="rno:310155"/>
<dbReference type="AGR" id="RGD:1307902"/>
<dbReference type="CTD" id="54545"/>
<dbReference type="RGD" id="1307902">
    <property type="gene designation" value="Mtmr12"/>
</dbReference>
<dbReference type="VEuPathDB" id="HostDB:ENSRNOG00000022929"/>
<dbReference type="eggNOG" id="KOG1089">
    <property type="taxonomic scope" value="Eukaryota"/>
</dbReference>
<dbReference type="HOGENOM" id="CLU_021912_2_0_1"/>
<dbReference type="InParanoid" id="Q5FVM6"/>
<dbReference type="PhylomeDB" id="Q5FVM6"/>
<dbReference type="TreeFam" id="TF315197"/>
<dbReference type="Reactome" id="R-RNO-1660516">
    <property type="pathway name" value="Synthesis of PIPs at the early endosome membrane"/>
</dbReference>
<dbReference type="PRO" id="PR:Q5FVM6"/>
<dbReference type="Proteomes" id="UP000002494">
    <property type="component" value="Chromosome 2"/>
</dbReference>
<dbReference type="Bgee" id="ENSRNOG00000022929">
    <property type="expression patterns" value="Expressed in lung and 18 other cell types or tissues"/>
</dbReference>
<dbReference type="GO" id="GO:0005737">
    <property type="term" value="C:cytoplasm"/>
    <property type="evidence" value="ECO:0000266"/>
    <property type="project" value="RGD"/>
</dbReference>
<dbReference type="GO" id="GO:0016020">
    <property type="term" value="C:membrane"/>
    <property type="evidence" value="ECO:0000318"/>
    <property type="project" value="GO_Central"/>
</dbReference>
<dbReference type="GO" id="GO:0030017">
    <property type="term" value="C:sarcomere"/>
    <property type="evidence" value="ECO:0007669"/>
    <property type="project" value="UniProtKB-SubCell"/>
</dbReference>
<dbReference type="GO" id="GO:0016529">
    <property type="term" value="C:sarcoplasmic reticulum"/>
    <property type="evidence" value="ECO:0007669"/>
    <property type="project" value="UniProtKB-SubCell"/>
</dbReference>
<dbReference type="GO" id="GO:0004438">
    <property type="term" value="F:phosphatidylinositol-3-phosphate phosphatase activity"/>
    <property type="evidence" value="ECO:0000318"/>
    <property type="project" value="GO_Central"/>
</dbReference>
<dbReference type="GO" id="GO:0046856">
    <property type="term" value="P:phosphatidylinositol dephosphorylation"/>
    <property type="evidence" value="ECO:0000318"/>
    <property type="project" value="GO_Central"/>
</dbReference>
<dbReference type="CDD" id="cd14594">
    <property type="entry name" value="PTP-MTMR12"/>
    <property type="match status" value="1"/>
</dbReference>
<dbReference type="FunFam" id="2.30.29.30:FF:000188">
    <property type="entry name" value="Myotubularin related protein 12"/>
    <property type="match status" value="1"/>
</dbReference>
<dbReference type="Gene3D" id="2.30.29.30">
    <property type="entry name" value="Pleckstrin-homology domain (PH domain)/Phosphotyrosine-binding domain (PTB)"/>
    <property type="match status" value="1"/>
</dbReference>
<dbReference type="InterPro" id="IPR022587">
    <property type="entry name" value="MTMR12-like_C"/>
</dbReference>
<dbReference type="InterPro" id="IPR030576">
    <property type="entry name" value="MTMR12_PTP"/>
</dbReference>
<dbReference type="InterPro" id="IPR030564">
    <property type="entry name" value="Myotubularin"/>
</dbReference>
<dbReference type="InterPro" id="IPR010569">
    <property type="entry name" value="Myotubularin-like_Pase_dom"/>
</dbReference>
<dbReference type="InterPro" id="IPR011993">
    <property type="entry name" value="PH-like_dom_sf"/>
</dbReference>
<dbReference type="InterPro" id="IPR029021">
    <property type="entry name" value="Prot-tyrosine_phosphatase-like"/>
</dbReference>
<dbReference type="PANTHER" id="PTHR10807">
    <property type="entry name" value="MYOTUBULARIN-RELATED"/>
    <property type="match status" value="1"/>
</dbReference>
<dbReference type="PANTHER" id="PTHR10807:SF37">
    <property type="entry name" value="MYOTUBULARIN-RELATED PROTEIN 12"/>
    <property type="match status" value="1"/>
</dbReference>
<dbReference type="Pfam" id="PF12578">
    <property type="entry name" value="3-PAP"/>
    <property type="match status" value="1"/>
</dbReference>
<dbReference type="Pfam" id="PF06602">
    <property type="entry name" value="Myotub-related"/>
    <property type="match status" value="1"/>
</dbReference>
<dbReference type="SUPFAM" id="SSF52799">
    <property type="entry name" value="(Phosphotyrosine protein) phosphatases II"/>
    <property type="match status" value="1"/>
</dbReference>
<dbReference type="SUPFAM" id="SSF50729">
    <property type="entry name" value="PH domain-like"/>
    <property type="match status" value="1"/>
</dbReference>
<dbReference type="PROSITE" id="PS51339">
    <property type="entry name" value="PPASE_MYOTUBULARIN"/>
    <property type="match status" value="1"/>
</dbReference>
<proteinExistence type="evidence at protein level"/>